<dbReference type="EMBL" id="AE005674">
    <property type="protein sequence ID" value="AAN45360.1"/>
    <property type="molecule type" value="Genomic_DNA"/>
</dbReference>
<dbReference type="EMBL" id="AE014073">
    <property type="protein sequence ID" value="AAP18838.1"/>
    <property type="molecule type" value="Genomic_DNA"/>
</dbReference>
<dbReference type="RefSeq" id="NP_709653.1">
    <property type="nucleotide sequence ID" value="NC_004337.2"/>
</dbReference>
<dbReference type="RefSeq" id="WP_000545677.1">
    <property type="nucleotide sequence ID" value="NZ_WPGW01000036.1"/>
</dbReference>
<dbReference type="SMR" id="P0AFZ9"/>
<dbReference type="STRING" id="198214.SF3925"/>
<dbReference type="PaxDb" id="198214-SF3925"/>
<dbReference type="GeneID" id="1023595"/>
<dbReference type="GeneID" id="93778088"/>
<dbReference type="KEGG" id="sfl:SF3925"/>
<dbReference type="KEGG" id="sfx:S3827"/>
<dbReference type="PATRIC" id="fig|198214.7.peg.4625"/>
<dbReference type="HOGENOM" id="CLU_030708_0_2_6"/>
<dbReference type="Proteomes" id="UP000001006">
    <property type="component" value="Chromosome"/>
</dbReference>
<dbReference type="Proteomes" id="UP000002673">
    <property type="component" value="Chromosome"/>
</dbReference>
<dbReference type="GO" id="GO:0005886">
    <property type="term" value="C:plasma membrane"/>
    <property type="evidence" value="ECO:0007669"/>
    <property type="project" value="UniProtKB-SubCell"/>
</dbReference>
<dbReference type="GO" id="GO:0005267">
    <property type="term" value="F:potassium channel activity"/>
    <property type="evidence" value="ECO:0000250"/>
    <property type="project" value="UniProtKB"/>
</dbReference>
<dbReference type="GO" id="GO:0030955">
    <property type="term" value="F:potassium ion binding"/>
    <property type="evidence" value="ECO:0000250"/>
    <property type="project" value="UniProtKB"/>
</dbReference>
<dbReference type="GO" id="GO:0015379">
    <property type="term" value="F:potassium:chloride symporter activity"/>
    <property type="evidence" value="ECO:0007669"/>
    <property type="project" value="InterPro"/>
</dbReference>
<dbReference type="GO" id="GO:0071805">
    <property type="term" value="P:potassium ion transmembrane transport"/>
    <property type="evidence" value="ECO:0000250"/>
    <property type="project" value="UniProtKB"/>
</dbReference>
<dbReference type="InterPro" id="IPR003445">
    <property type="entry name" value="Cat_transpt"/>
</dbReference>
<dbReference type="InterPro" id="IPR004772">
    <property type="entry name" value="TrkH"/>
</dbReference>
<dbReference type="NCBIfam" id="TIGR00933">
    <property type="entry name" value="2a38"/>
    <property type="match status" value="1"/>
</dbReference>
<dbReference type="NCBIfam" id="NF008020">
    <property type="entry name" value="PRK10750.1"/>
    <property type="match status" value="1"/>
</dbReference>
<dbReference type="PANTHER" id="PTHR32024">
    <property type="entry name" value="TRK SYSTEM POTASSIUM UPTAKE PROTEIN TRKG-RELATED"/>
    <property type="match status" value="1"/>
</dbReference>
<dbReference type="PANTHER" id="PTHR32024:SF2">
    <property type="entry name" value="TRK SYSTEM POTASSIUM UPTAKE PROTEIN TRKG-RELATED"/>
    <property type="match status" value="1"/>
</dbReference>
<dbReference type="Pfam" id="PF02386">
    <property type="entry name" value="TrkH"/>
    <property type="match status" value="1"/>
</dbReference>
<dbReference type="PIRSF" id="PIRSF006247">
    <property type="entry name" value="TrkH"/>
    <property type="match status" value="1"/>
</dbReference>
<proteinExistence type="inferred from homology"/>
<protein>
    <recommendedName>
        <fullName>Trk system potassium uptake protein TrkH</fullName>
    </recommendedName>
</protein>
<comment type="function">
    <text evidence="1">Low-affinity potassium transport system. Interacts with Trk system potassium uptake protein TrkA and requires TrkE for transport activity (By similarity).</text>
</comment>
<comment type="subcellular location">
    <subcellularLocation>
        <location evidence="1">Cell inner membrane</location>
        <topology evidence="1">Multi-pass membrane protein</topology>
    </subcellularLocation>
</comment>
<comment type="similarity">
    <text evidence="3">Belongs to the TrkH potassium transport family.</text>
</comment>
<evidence type="ECO:0000250" key="1"/>
<evidence type="ECO:0000250" key="2">
    <source>
        <dbReference type="UniProtKB" id="Q87TN7"/>
    </source>
</evidence>
<evidence type="ECO:0000305" key="3"/>
<reference key="1">
    <citation type="journal article" date="2002" name="Nucleic Acids Res.">
        <title>Genome sequence of Shigella flexneri 2a: insights into pathogenicity through comparison with genomes of Escherichia coli K12 and O157.</title>
        <authorList>
            <person name="Jin Q."/>
            <person name="Yuan Z."/>
            <person name="Xu J."/>
            <person name="Wang Y."/>
            <person name="Shen Y."/>
            <person name="Lu W."/>
            <person name="Wang J."/>
            <person name="Liu H."/>
            <person name="Yang J."/>
            <person name="Yang F."/>
            <person name="Zhang X."/>
            <person name="Zhang J."/>
            <person name="Yang G."/>
            <person name="Wu H."/>
            <person name="Qu D."/>
            <person name="Dong J."/>
            <person name="Sun L."/>
            <person name="Xue Y."/>
            <person name="Zhao A."/>
            <person name="Gao Y."/>
            <person name="Zhu J."/>
            <person name="Kan B."/>
            <person name="Ding K."/>
            <person name="Chen S."/>
            <person name="Cheng H."/>
            <person name="Yao Z."/>
            <person name="He B."/>
            <person name="Chen R."/>
            <person name="Ma D."/>
            <person name="Qiang B."/>
            <person name="Wen Y."/>
            <person name="Hou Y."/>
            <person name="Yu J."/>
        </authorList>
    </citation>
    <scope>NUCLEOTIDE SEQUENCE [LARGE SCALE GENOMIC DNA]</scope>
    <source>
        <strain>301 / Serotype 2a</strain>
    </source>
</reference>
<reference key="2">
    <citation type="journal article" date="2003" name="Infect. Immun.">
        <title>Complete genome sequence and comparative genomics of Shigella flexneri serotype 2a strain 2457T.</title>
        <authorList>
            <person name="Wei J."/>
            <person name="Goldberg M.B."/>
            <person name="Burland V."/>
            <person name="Venkatesan M.M."/>
            <person name="Deng W."/>
            <person name="Fournier G."/>
            <person name="Mayhew G.F."/>
            <person name="Plunkett G. III"/>
            <person name="Rose D.J."/>
            <person name="Darling A."/>
            <person name="Mau B."/>
            <person name="Perna N.T."/>
            <person name="Payne S.M."/>
            <person name="Runyen-Janecky L.J."/>
            <person name="Zhou S."/>
            <person name="Schwartz D.C."/>
            <person name="Blattner F.R."/>
        </authorList>
    </citation>
    <scope>NUCLEOTIDE SEQUENCE [LARGE SCALE GENOMIC DNA]</scope>
    <source>
        <strain>ATCC 700930 / 2457T / Serotype 2a</strain>
    </source>
</reference>
<name>TRKH_SHIFL</name>
<keyword id="KW-0997">Cell inner membrane</keyword>
<keyword id="KW-1003">Cell membrane</keyword>
<keyword id="KW-0407">Ion channel</keyword>
<keyword id="KW-0406">Ion transport</keyword>
<keyword id="KW-0472">Membrane</keyword>
<keyword id="KW-0479">Metal-binding</keyword>
<keyword id="KW-0630">Potassium</keyword>
<keyword id="KW-0633">Potassium transport</keyword>
<keyword id="KW-1185">Reference proteome</keyword>
<keyword id="KW-0812">Transmembrane</keyword>
<keyword id="KW-1133">Transmembrane helix</keyword>
<keyword id="KW-0813">Transport</keyword>
<sequence>MHFRAITRIVGLLVILFSGTMIIPGLVALIYRDGAGRAFTQTFFVALAIGSMLWWPNRKEKGELKSREGFLIVVLFWTVLGSVGALPFIFSESPNLTITDAFFESFSGLTTTGATTLVGLDSLPHAILFYRQMLQWFGGMGIIVLAVAILPILGVGGMQLYRAEMPGPLKDNKMRPRIAETAKTLWLIYVLLTVACALALWFAGMDAFDAIGHSFATIAIGGFSTHDASIGYFDSPTINTIIAIFLLISGCNYGLHFSLLSGRSLKVYWRDPEFRMFIGVQFTLVVICTLVLWFHNVYSSALMTINQAFFQVVSMATTAGFTTDSIARWPLFLPVLLLCSAFIGGCAGSTGGGLKVIRILLLFKQGNRELKRLVHPNAVYSIKLGNRALPERILEAVWGFFSAYALVFIVSMLAIIATGVDDFSAFASVVATLNNLGPGLGVVADNFTSMNPVAKWILIANMLFGRLEVFTLLVLFTPTFWRE</sequence>
<feature type="chain" id="PRO_0000070479" description="Trk system potassium uptake protein TrkH">
    <location>
        <begin position="1"/>
        <end position="483"/>
    </location>
</feature>
<feature type="topological domain" description="Cytoplasmic" evidence="1">
    <location>
        <begin position="1"/>
        <end position="2"/>
    </location>
</feature>
<feature type="transmembrane region" description="Helical" evidence="1">
    <location>
        <begin position="3"/>
        <end position="29"/>
    </location>
</feature>
<feature type="topological domain" description="Periplasmic" evidence="1">
    <location>
        <begin position="30"/>
        <end position="35"/>
    </location>
</feature>
<feature type="transmembrane region" description="Helical" evidence="1">
    <location>
        <begin position="36"/>
        <end position="57"/>
    </location>
</feature>
<feature type="topological domain" description="Cytoplasmic" evidence="1">
    <location>
        <begin position="58"/>
        <end position="65"/>
    </location>
</feature>
<feature type="transmembrane region" description="Helical" evidence="1">
    <location>
        <begin position="66"/>
        <end position="90"/>
    </location>
</feature>
<feature type="topological domain" description="Periplasmic" evidence="1">
    <location>
        <begin position="91"/>
        <end status="unknown"/>
    </location>
</feature>
<feature type="intramembrane region" evidence="1">
    <location>
        <begin status="unknown"/>
        <end position="97"/>
    </location>
</feature>
<feature type="intramembrane region" description="Helical; Pore-forming" evidence="1">
    <location>
        <begin position="98"/>
        <end position="109"/>
    </location>
</feature>
<feature type="intramembrane region" evidence="1">
    <location>
        <begin position="110"/>
        <end position="115"/>
    </location>
</feature>
<feature type="topological domain" description="Periplasmic" evidence="1">
    <location>
        <begin position="116"/>
        <end position="124"/>
    </location>
</feature>
<feature type="transmembrane region" description="Helical" evidence="1">
    <location>
        <begin position="125"/>
        <end position="150"/>
    </location>
</feature>
<feature type="topological domain" description="Cytoplasmic" evidence="1">
    <location>
        <begin position="151"/>
        <end position="177"/>
    </location>
</feature>
<feature type="transmembrane region" description="Helical" evidence="1">
    <location>
        <begin position="178"/>
        <end position="202"/>
    </location>
</feature>
<feature type="topological domain" description="Periplasmic" evidence="1">
    <location>
        <begin position="203"/>
        <end position="205"/>
    </location>
</feature>
<feature type="intramembrane region" evidence="1">
    <location>
        <position position="206"/>
    </location>
</feature>
<feature type="intramembrane region" description="Helical; Pore-forming" evidence="1">
    <location>
        <begin position="207"/>
        <end position="218"/>
    </location>
</feature>
<feature type="intramembrane region" evidence="1">
    <location>
        <begin position="219"/>
        <end position="224"/>
    </location>
</feature>
<feature type="topological domain" description="Periplasmic" evidence="1">
    <location>
        <begin position="225"/>
        <end position="234"/>
    </location>
</feature>
<feature type="intramembrane region" description="Helical" evidence="1">
    <location>
        <begin position="235"/>
        <end position="250"/>
    </location>
</feature>
<feature type="intramembrane region" evidence="1">
    <location>
        <begin position="251"/>
        <end status="unknown"/>
    </location>
</feature>
<feature type="topological domain" description="Cytoplasmic" evidence="1">
    <location>
        <begin status="unknown"/>
        <end position="273"/>
    </location>
</feature>
<feature type="transmembrane region" description="Helical" evidence="1">
    <location>
        <begin position="274"/>
        <end position="294"/>
    </location>
</feature>
<feature type="topological domain" description="Periplasmic" evidence="1">
    <location>
        <begin position="295"/>
        <end status="unknown"/>
    </location>
</feature>
<feature type="intramembrane region" evidence="1">
    <location>
        <begin status="unknown"/>
        <end position="300"/>
    </location>
</feature>
<feature type="intramembrane region" description="Helical; Pore-forming" evidence="1">
    <location>
        <begin position="301"/>
        <end position="316"/>
    </location>
</feature>
<feature type="intramembrane region" evidence="1">
    <location>
        <begin position="317"/>
        <end position="322"/>
    </location>
</feature>
<feature type="topological domain" description="Periplasmic" evidence="1">
    <location>
        <begin position="323"/>
        <end position="330"/>
    </location>
</feature>
<feature type="intramembrane region" description="Helical" evidence="1">
    <location>
        <begin position="331"/>
        <end position="342"/>
    </location>
</feature>
<feature type="intramembrane region" description="Note=Loop between two helices" evidence="1">
    <location>
        <begin position="343"/>
        <end position="355"/>
    </location>
</feature>
<feature type="intramembrane region" description="Helical" evidence="1">
    <location>
        <begin position="356"/>
        <end status="unknown"/>
    </location>
</feature>
<feature type="topological domain" description="Cytoplasmic" evidence="1">
    <location>
        <begin status="unknown"/>
        <end position="389"/>
    </location>
</feature>
<feature type="transmembrane region" description="Helical" evidence="1">
    <location>
        <begin position="390"/>
        <end position="417"/>
    </location>
</feature>
<feature type="topological domain" description="Periplasmic" evidence="1">
    <location>
        <begin position="418"/>
        <end position="419"/>
    </location>
</feature>
<feature type="intramembrane region" evidence="1">
    <location>
        <begin position="420"/>
        <end position="421"/>
    </location>
</feature>
<feature type="intramembrane region" description="Helical; Pore-forming" evidence="1">
    <location>
        <begin position="422"/>
        <end position="432"/>
    </location>
</feature>
<feature type="intramembrane region" evidence="1">
    <location>
        <begin position="433"/>
        <end position="439"/>
    </location>
</feature>
<feature type="topological domain" description="Periplasmic" evidence="1">
    <location>
        <begin position="440"/>
        <end position="451"/>
    </location>
</feature>
<feature type="intramembrane region" description="Helical" evidence="1">
    <location>
        <begin position="452"/>
        <end position="463"/>
    </location>
</feature>
<feature type="intramembrane region" evidence="1">
    <location>
        <begin position="464"/>
        <end status="unknown"/>
    </location>
</feature>
<feature type="topological domain" description="Cytoplasmic" evidence="1">
    <location>
        <begin status="unknown"/>
        <end position="483"/>
    </location>
</feature>
<feature type="region of interest" description="Selectivity filter part 1" evidence="1">
    <location>
        <begin position="110"/>
        <end position="115"/>
    </location>
</feature>
<feature type="region of interest" description="Selectivity filter part 2" evidence="1">
    <location>
        <begin position="219"/>
        <end position="224"/>
    </location>
</feature>
<feature type="region of interest" description="Selectivity filter part 3" evidence="1">
    <location>
        <begin position="317"/>
        <end position="322"/>
    </location>
</feature>
<feature type="region of interest" description="Selectivity filter part 4" evidence="1">
    <location>
        <begin position="434"/>
        <end position="439"/>
    </location>
</feature>
<feature type="binding site" evidence="2">
    <location>
        <position position="111"/>
    </location>
    <ligand>
        <name>K(+)</name>
        <dbReference type="ChEBI" id="CHEBI:29103"/>
    </ligand>
</feature>
<feature type="binding site" evidence="2">
    <location>
        <position position="112"/>
    </location>
    <ligand>
        <name>K(+)</name>
        <dbReference type="ChEBI" id="CHEBI:29103"/>
    </ligand>
</feature>
<feature type="binding site" evidence="2">
    <location>
        <position position="220"/>
    </location>
    <ligand>
        <name>K(+)</name>
        <dbReference type="ChEBI" id="CHEBI:29103"/>
    </ligand>
</feature>
<feature type="binding site" evidence="2">
    <location>
        <position position="221"/>
    </location>
    <ligand>
        <name>K(+)</name>
        <dbReference type="ChEBI" id="CHEBI:29103"/>
    </ligand>
</feature>
<feature type="binding site" evidence="2">
    <location>
        <position position="318"/>
    </location>
    <ligand>
        <name>K(+)</name>
        <dbReference type="ChEBI" id="CHEBI:29103"/>
    </ligand>
</feature>
<feature type="binding site" evidence="2">
    <location>
        <position position="319"/>
    </location>
    <ligand>
        <name>K(+)</name>
        <dbReference type="ChEBI" id="CHEBI:29103"/>
    </ligand>
</feature>
<feature type="binding site" evidence="2">
    <location>
        <position position="435"/>
    </location>
    <ligand>
        <name>K(+)</name>
        <dbReference type="ChEBI" id="CHEBI:29103"/>
    </ligand>
</feature>
<feature type="binding site" evidence="2">
    <location>
        <position position="436"/>
    </location>
    <ligand>
        <name>K(+)</name>
        <dbReference type="ChEBI" id="CHEBI:29103"/>
    </ligand>
</feature>
<organism>
    <name type="scientific">Shigella flexneri</name>
    <dbReference type="NCBI Taxonomy" id="623"/>
    <lineage>
        <taxon>Bacteria</taxon>
        <taxon>Pseudomonadati</taxon>
        <taxon>Pseudomonadota</taxon>
        <taxon>Gammaproteobacteria</taxon>
        <taxon>Enterobacterales</taxon>
        <taxon>Enterobacteriaceae</taxon>
        <taxon>Shigella</taxon>
    </lineage>
</organism>
<gene>
    <name type="primary">trkH</name>
    <name type="ordered locus">SF3925</name>
    <name type="ordered locus">S3827</name>
</gene>
<accession>P0AFZ9</accession>
<accession>P21166</accession>
<accession>P76769</accession>